<keyword id="KW-0002">3D-structure</keyword>
<keyword id="KW-0903">Direct protein sequencing</keyword>
<keyword id="KW-1185">Reference proteome</keyword>
<keyword id="KW-0687">Ribonucleoprotein</keyword>
<keyword id="KW-0689">Ribosomal protein</keyword>
<gene>
    <name type="primary">rpmH</name>
    <name type="synonym">rpl34</name>
    <name type="ordered locus">TTHA0446</name>
</gene>
<sequence>MKRTWQPNRRKRAKTHGFRARMRTPGGRKVLKRRRQKGRWRLTPAVRKR</sequence>
<accession>P80340</accession>
<accession>Q5SL47</accession>
<accession>Q7X5K7</accession>
<protein>
    <recommendedName>
        <fullName evidence="3">Large ribosomal subunit protein bL34</fullName>
    </recommendedName>
    <alternativeName>
        <fullName>50S ribosomal protein L34</fullName>
    </alternativeName>
</protein>
<organism>
    <name type="scientific">Thermus thermophilus (strain ATCC 27634 / DSM 579 / HB8)</name>
    <dbReference type="NCBI Taxonomy" id="300852"/>
    <lineage>
        <taxon>Bacteria</taxon>
        <taxon>Thermotogati</taxon>
        <taxon>Deinococcota</taxon>
        <taxon>Deinococci</taxon>
        <taxon>Thermales</taxon>
        <taxon>Thermaceae</taxon>
        <taxon>Thermus</taxon>
    </lineage>
</organism>
<evidence type="ECO:0000256" key="1">
    <source>
        <dbReference type="SAM" id="MobiDB-lite"/>
    </source>
</evidence>
<evidence type="ECO:0000269" key="2">
    <source>
    </source>
</evidence>
<evidence type="ECO:0000305" key="3"/>
<evidence type="ECO:0007829" key="4">
    <source>
        <dbReference type="PDB" id="4WT8"/>
    </source>
</evidence>
<dbReference type="EMBL" id="AY256342">
    <property type="protein sequence ID" value="AAO88976.1"/>
    <property type="molecule type" value="Genomic_DNA"/>
</dbReference>
<dbReference type="EMBL" id="AP008226">
    <property type="protein sequence ID" value="BAD70269.1"/>
    <property type="molecule type" value="Genomic_DNA"/>
</dbReference>
<dbReference type="RefSeq" id="WP_011227941.1">
    <property type="nucleotide sequence ID" value="NC_006461.1"/>
</dbReference>
<dbReference type="RefSeq" id="YP_143712.1">
    <property type="nucleotide sequence ID" value="NC_006461.1"/>
</dbReference>
<dbReference type="PDB" id="1VVJ">
    <property type="method" value="X-ray"/>
    <property type="resolution" value="3.44 A"/>
    <property type="chains" value="R7/Y7=1-49"/>
</dbReference>
<dbReference type="PDB" id="1VY4">
    <property type="method" value="X-ray"/>
    <property type="resolution" value="2.60 A"/>
    <property type="chains" value="B7/D7=1-49"/>
</dbReference>
<dbReference type="PDB" id="1VY5">
    <property type="method" value="X-ray"/>
    <property type="resolution" value="2.55 A"/>
    <property type="chains" value="B7/D7=1-49"/>
</dbReference>
<dbReference type="PDB" id="1VY6">
    <property type="method" value="X-ray"/>
    <property type="resolution" value="2.90 A"/>
    <property type="chains" value="B7/D7=1-49"/>
</dbReference>
<dbReference type="PDB" id="1VY7">
    <property type="method" value="X-ray"/>
    <property type="resolution" value="2.80 A"/>
    <property type="chains" value="B7/D7=1-49"/>
</dbReference>
<dbReference type="PDB" id="4L47">
    <property type="method" value="X-ray"/>
    <property type="resolution" value="3.22 A"/>
    <property type="chains" value="R7/Y7=1-49"/>
</dbReference>
<dbReference type="PDB" id="4L71">
    <property type="method" value="X-ray"/>
    <property type="resolution" value="3.90 A"/>
    <property type="chains" value="R7/Y7=1-49"/>
</dbReference>
<dbReference type="PDB" id="4LEL">
    <property type="method" value="X-ray"/>
    <property type="resolution" value="3.90 A"/>
    <property type="chains" value="R7/Y7=1-49"/>
</dbReference>
<dbReference type="PDB" id="4LFZ">
    <property type="method" value="X-ray"/>
    <property type="resolution" value="3.92 A"/>
    <property type="chains" value="R7/Y7=1-49"/>
</dbReference>
<dbReference type="PDB" id="4LNT">
    <property type="method" value="X-ray"/>
    <property type="resolution" value="2.94 A"/>
    <property type="chains" value="R7/Y7=1-49"/>
</dbReference>
<dbReference type="PDB" id="4LSK">
    <property type="method" value="X-ray"/>
    <property type="resolution" value="3.48 A"/>
    <property type="chains" value="R7/Y7=1-49"/>
</dbReference>
<dbReference type="PDB" id="4LT8">
    <property type="method" value="X-ray"/>
    <property type="resolution" value="3.14 A"/>
    <property type="chains" value="R7/Y7=1-49"/>
</dbReference>
<dbReference type="PDB" id="4P6F">
    <property type="method" value="X-ray"/>
    <property type="resolution" value="3.60 A"/>
    <property type="chains" value="R7/Y7=1-49"/>
</dbReference>
<dbReference type="PDB" id="4P70">
    <property type="method" value="X-ray"/>
    <property type="resolution" value="3.68 A"/>
    <property type="chains" value="R7/Y7=1-49"/>
</dbReference>
<dbReference type="PDB" id="4TUA">
    <property type="method" value="X-ray"/>
    <property type="resolution" value="3.60 A"/>
    <property type="chains" value="R7/Y7=1-49"/>
</dbReference>
<dbReference type="PDB" id="4TUB">
    <property type="method" value="X-ray"/>
    <property type="resolution" value="3.60 A"/>
    <property type="chains" value="R7/Y7=1-49"/>
</dbReference>
<dbReference type="PDB" id="4TUC">
    <property type="method" value="X-ray"/>
    <property type="resolution" value="3.60 A"/>
    <property type="chains" value="R7/Y7=1-49"/>
</dbReference>
<dbReference type="PDB" id="4TUD">
    <property type="method" value="X-ray"/>
    <property type="resolution" value="3.60 A"/>
    <property type="chains" value="R7/Y7=1-49"/>
</dbReference>
<dbReference type="PDB" id="4TUE">
    <property type="method" value="X-ray"/>
    <property type="resolution" value="3.50 A"/>
    <property type="chains" value="R7/Y7=1-49"/>
</dbReference>
<dbReference type="PDB" id="4V4I">
    <property type="method" value="X-ray"/>
    <property type="resolution" value="3.71 A"/>
    <property type="chains" value="Z=1-49"/>
</dbReference>
<dbReference type="PDB" id="4V4J">
    <property type="method" value="X-ray"/>
    <property type="resolution" value="3.83 A"/>
    <property type="chains" value="Z=1-49"/>
</dbReference>
<dbReference type="PDB" id="4V4X">
    <property type="method" value="X-ray"/>
    <property type="resolution" value="5.00 A"/>
    <property type="chains" value="B6=1-49"/>
</dbReference>
<dbReference type="PDB" id="4V4Y">
    <property type="method" value="X-ray"/>
    <property type="resolution" value="5.50 A"/>
    <property type="chains" value="B6=1-49"/>
</dbReference>
<dbReference type="PDB" id="4V4Z">
    <property type="method" value="X-ray"/>
    <property type="resolution" value="4.51 A"/>
    <property type="chains" value="B6=1-49"/>
</dbReference>
<dbReference type="PDB" id="4V51">
    <property type="method" value="X-ray"/>
    <property type="resolution" value="2.80 A"/>
    <property type="chains" value="B7/D7=1-49"/>
</dbReference>
<dbReference type="PDB" id="4V5A">
    <property type="method" value="X-ray"/>
    <property type="resolution" value="3.50 A"/>
    <property type="chains" value="B7/D7=1-49"/>
</dbReference>
<dbReference type="PDB" id="4V5C">
    <property type="method" value="X-ray"/>
    <property type="resolution" value="3.30 A"/>
    <property type="chains" value="B7/D7=1-49"/>
</dbReference>
<dbReference type="PDB" id="4V5D">
    <property type="method" value="X-ray"/>
    <property type="resolution" value="3.50 A"/>
    <property type="chains" value="B7/D7=1-49"/>
</dbReference>
<dbReference type="PDB" id="4V5E">
    <property type="method" value="X-ray"/>
    <property type="resolution" value="3.45 A"/>
    <property type="chains" value="B7/D7=1-49"/>
</dbReference>
<dbReference type="PDB" id="4V5F">
    <property type="method" value="X-ray"/>
    <property type="resolution" value="3.60 A"/>
    <property type="chains" value="B7/D7=1-49"/>
</dbReference>
<dbReference type="PDB" id="4V5G">
    <property type="method" value="X-ray"/>
    <property type="resolution" value="3.60 A"/>
    <property type="chains" value="B7/D7=1-49"/>
</dbReference>
<dbReference type="PDB" id="4V5J">
    <property type="method" value="X-ray"/>
    <property type="resolution" value="3.10 A"/>
    <property type="chains" value="B7/D7=1-49"/>
</dbReference>
<dbReference type="PDB" id="4V5K">
    <property type="method" value="X-ray"/>
    <property type="resolution" value="3.20 A"/>
    <property type="chains" value="B7/D7=1-49"/>
</dbReference>
<dbReference type="PDB" id="4V5L">
    <property type="method" value="X-ray"/>
    <property type="resolution" value="3.10 A"/>
    <property type="chains" value="B7=1-49"/>
</dbReference>
<dbReference type="PDB" id="4V5M">
    <property type="method" value="EM"/>
    <property type="resolution" value="7.80 A"/>
    <property type="chains" value="B7=1-49"/>
</dbReference>
<dbReference type="PDB" id="4V5N">
    <property type="method" value="EM"/>
    <property type="resolution" value="7.60 A"/>
    <property type="chains" value="B7=1-49"/>
</dbReference>
<dbReference type="PDB" id="4V5P">
    <property type="method" value="X-ray"/>
    <property type="resolution" value="3.10 A"/>
    <property type="chains" value="B7/D7=1-49"/>
</dbReference>
<dbReference type="PDB" id="4V5Q">
    <property type="method" value="X-ray"/>
    <property type="resolution" value="3.10 A"/>
    <property type="chains" value="B7/D7=1-49"/>
</dbReference>
<dbReference type="PDB" id="4V5R">
    <property type="method" value="X-ray"/>
    <property type="resolution" value="3.10 A"/>
    <property type="chains" value="B7/D7=1-49"/>
</dbReference>
<dbReference type="PDB" id="4V5S">
    <property type="method" value="X-ray"/>
    <property type="resolution" value="3.10 A"/>
    <property type="chains" value="B7/D7=1-49"/>
</dbReference>
<dbReference type="PDB" id="4V63">
    <property type="method" value="X-ray"/>
    <property type="resolution" value="3.21 A"/>
    <property type="chains" value="B7/D7=1-49"/>
</dbReference>
<dbReference type="PDB" id="4V67">
    <property type="method" value="X-ray"/>
    <property type="resolution" value="3.00 A"/>
    <property type="chains" value="B7/D7=1-49"/>
</dbReference>
<dbReference type="PDB" id="4V68">
    <property type="method" value="EM"/>
    <property type="resolution" value="6.40 A"/>
    <property type="chains" value="B7=1-49"/>
</dbReference>
<dbReference type="PDB" id="4V6A">
    <property type="method" value="X-ray"/>
    <property type="resolution" value="3.10 A"/>
    <property type="chains" value="B7/D7=1-49"/>
</dbReference>
<dbReference type="PDB" id="4V6F">
    <property type="method" value="X-ray"/>
    <property type="resolution" value="3.10 A"/>
    <property type="chains" value="A7/D7=1-49"/>
</dbReference>
<dbReference type="PDB" id="4V6G">
    <property type="method" value="X-ray"/>
    <property type="resolution" value="3.50 A"/>
    <property type="chains" value="B7/D7=1-49"/>
</dbReference>
<dbReference type="PDB" id="4V7J">
    <property type="method" value="X-ray"/>
    <property type="resolution" value="3.30 A"/>
    <property type="chains" value="A7/B7=1-49"/>
</dbReference>
<dbReference type="PDB" id="4V7K">
    <property type="method" value="X-ray"/>
    <property type="resolution" value="3.60 A"/>
    <property type="chains" value="A7/B7=1-49"/>
</dbReference>
<dbReference type="PDB" id="4V7L">
    <property type="method" value="X-ray"/>
    <property type="resolution" value="3.00 A"/>
    <property type="chains" value="B7/D7=1-49"/>
</dbReference>
<dbReference type="PDB" id="4V7M">
    <property type="method" value="X-ray"/>
    <property type="resolution" value="3.45 A"/>
    <property type="chains" value="B7/D7=1-49"/>
</dbReference>
<dbReference type="PDB" id="4V7P">
    <property type="method" value="X-ray"/>
    <property type="resolution" value="3.62 A"/>
    <property type="chains" value="B4/C4=1-48"/>
</dbReference>
<dbReference type="PDB" id="4V7W">
    <property type="method" value="X-ray"/>
    <property type="resolution" value="3.00 A"/>
    <property type="chains" value="B7/D7=1-49"/>
</dbReference>
<dbReference type="PDB" id="4V7X">
    <property type="method" value="X-ray"/>
    <property type="resolution" value="3.00 A"/>
    <property type="chains" value="B7/D7=1-49"/>
</dbReference>
<dbReference type="PDB" id="4V7Y">
    <property type="method" value="X-ray"/>
    <property type="resolution" value="3.00 A"/>
    <property type="chains" value="B7/D7=1-49"/>
</dbReference>
<dbReference type="PDB" id="4V7Z">
    <property type="method" value="X-ray"/>
    <property type="resolution" value="3.10 A"/>
    <property type="chains" value="B7/D7=1-49"/>
</dbReference>
<dbReference type="PDB" id="4V83">
    <property type="method" value="X-ray"/>
    <property type="resolution" value="3.50 A"/>
    <property type="chains" value="B4/D4=1-48"/>
</dbReference>
<dbReference type="PDB" id="4V84">
    <property type="method" value="X-ray"/>
    <property type="resolution" value="3.40 A"/>
    <property type="chains" value="B4/D4=1-48"/>
</dbReference>
<dbReference type="PDB" id="4V87">
    <property type="method" value="X-ray"/>
    <property type="resolution" value="3.10 A"/>
    <property type="chains" value="A7/D7=1-49"/>
</dbReference>
<dbReference type="PDB" id="4V8A">
    <property type="method" value="X-ray"/>
    <property type="resolution" value="3.20 A"/>
    <property type="chains" value="A7/B7=1-49"/>
</dbReference>
<dbReference type="PDB" id="4V8B">
    <property type="method" value="X-ray"/>
    <property type="resolution" value="3.00 A"/>
    <property type="chains" value="B7/D7=1-49"/>
</dbReference>
<dbReference type="PDB" id="4V8C">
    <property type="method" value="X-ray"/>
    <property type="resolution" value="3.30 A"/>
    <property type="chains" value="A7/B7=1-49"/>
</dbReference>
<dbReference type="PDB" id="4V8D">
    <property type="method" value="X-ray"/>
    <property type="resolution" value="3.00 A"/>
    <property type="chains" value="B7/D7=1-49"/>
</dbReference>
<dbReference type="PDB" id="4V8E">
    <property type="method" value="X-ray"/>
    <property type="resolution" value="3.30 A"/>
    <property type="chains" value="A7/C7=1-49"/>
</dbReference>
<dbReference type="PDB" id="4V8F">
    <property type="method" value="X-ray"/>
    <property type="resolution" value="3.30 A"/>
    <property type="chains" value="A7/D7=1-49"/>
</dbReference>
<dbReference type="PDB" id="4V8G">
    <property type="method" value="X-ray"/>
    <property type="resolution" value="3.00 A"/>
    <property type="chains" value="B7/D7=1-49"/>
</dbReference>
<dbReference type="PDB" id="4V8H">
    <property type="method" value="X-ray"/>
    <property type="resolution" value="3.10 A"/>
    <property type="chains" value="B7/D7=1-49"/>
</dbReference>
<dbReference type="PDB" id="4V8I">
    <property type="method" value="X-ray"/>
    <property type="resolution" value="2.70 A"/>
    <property type="chains" value="B7/D7=1-49"/>
</dbReference>
<dbReference type="PDB" id="4V8J">
    <property type="method" value="X-ray"/>
    <property type="resolution" value="3.90 A"/>
    <property type="chains" value="B7/D7=1-49"/>
</dbReference>
<dbReference type="PDB" id="4V8N">
    <property type="method" value="X-ray"/>
    <property type="resolution" value="3.10 A"/>
    <property type="chains" value="B7/D7=1-49"/>
</dbReference>
<dbReference type="PDB" id="4V8O">
    <property type="method" value="X-ray"/>
    <property type="resolution" value="3.80 A"/>
    <property type="chains" value="B7=1-49"/>
</dbReference>
<dbReference type="PDB" id="4V8Q">
    <property type="method" value="X-ray"/>
    <property type="resolution" value="3.10 A"/>
    <property type="chains" value="A7=1-49"/>
</dbReference>
<dbReference type="PDB" id="4V8U">
    <property type="method" value="X-ray"/>
    <property type="resolution" value="3.70 A"/>
    <property type="chains" value="B7/D7=1-49"/>
</dbReference>
<dbReference type="PDB" id="4V8X">
    <property type="method" value="X-ray"/>
    <property type="resolution" value="3.35 A"/>
    <property type="chains" value="B7/D7=1-49"/>
</dbReference>
<dbReference type="PDB" id="4V90">
    <property type="method" value="X-ray"/>
    <property type="resolution" value="2.95 A"/>
    <property type="chains" value="B7=1-48"/>
</dbReference>
<dbReference type="PDB" id="4V95">
    <property type="method" value="X-ray"/>
    <property type="resolution" value="3.20 A"/>
    <property type="chains" value="B7/D7=1-49"/>
</dbReference>
<dbReference type="PDB" id="4V97">
    <property type="method" value="X-ray"/>
    <property type="resolution" value="3.52 A"/>
    <property type="chains" value="B7/D7=1-49"/>
</dbReference>
<dbReference type="PDB" id="4V9A">
    <property type="method" value="X-ray"/>
    <property type="resolution" value="3.30 A"/>
    <property type="chains" value="B7/D7=1-49"/>
</dbReference>
<dbReference type="PDB" id="4V9B">
    <property type="method" value="X-ray"/>
    <property type="resolution" value="3.10 A"/>
    <property type="chains" value="B7/D7=1-49"/>
</dbReference>
<dbReference type="PDB" id="4V9H">
    <property type="method" value="X-ray"/>
    <property type="resolution" value="2.86 A"/>
    <property type="chains" value="B7=1-49"/>
</dbReference>
<dbReference type="PDB" id="4V9I">
    <property type="method" value="X-ray"/>
    <property type="resolution" value="3.30 A"/>
    <property type="chains" value="B7/D7=1-48"/>
</dbReference>
<dbReference type="PDB" id="4V9J">
    <property type="method" value="X-ray"/>
    <property type="resolution" value="3.86 A"/>
    <property type="chains" value="B7/D7=1-49"/>
</dbReference>
<dbReference type="PDB" id="4V9K">
    <property type="method" value="X-ray"/>
    <property type="resolution" value="3.50 A"/>
    <property type="chains" value="B7/D7=1-49"/>
</dbReference>
<dbReference type="PDB" id="4V9L">
    <property type="method" value="X-ray"/>
    <property type="resolution" value="3.50 A"/>
    <property type="chains" value="B7/D7=1-49"/>
</dbReference>
<dbReference type="PDB" id="4V9M">
    <property type="method" value="X-ray"/>
    <property type="resolution" value="4.00 A"/>
    <property type="chains" value="B7/D7=1-49"/>
</dbReference>
<dbReference type="PDB" id="4V9N">
    <property type="method" value="X-ray"/>
    <property type="resolution" value="3.40 A"/>
    <property type="chains" value="B7/D7=1-48"/>
</dbReference>
<dbReference type="PDB" id="4V9Q">
    <property type="method" value="X-ray"/>
    <property type="resolution" value="3.40 A"/>
    <property type="chains" value="A4/C4=1-48"/>
</dbReference>
<dbReference type="PDB" id="4V9R">
    <property type="method" value="X-ray"/>
    <property type="resolution" value="3.00 A"/>
    <property type="chains" value="B7/D7=1-49"/>
</dbReference>
<dbReference type="PDB" id="4V9S">
    <property type="method" value="X-ray"/>
    <property type="resolution" value="3.10 A"/>
    <property type="chains" value="B7/D7=1-49"/>
</dbReference>
<dbReference type="PDB" id="4W29">
    <property type="method" value="X-ray"/>
    <property type="resolution" value="3.80 A"/>
    <property type="chains" value="B7/D7=1-49"/>
</dbReference>
<dbReference type="PDB" id="4W2E">
    <property type="method" value="X-ray"/>
    <property type="resolution" value="2.90 A"/>
    <property type="chains" value="7=1-49"/>
</dbReference>
<dbReference type="PDB" id="4W2F">
    <property type="method" value="X-ray"/>
    <property type="resolution" value="2.40 A"/>
    <property type="chains" value="B7/D7=1-49"/>
</dbReference>
<dbReference type="PDB" id="4W2G">
    <property type="method" value="X-ray"/>
    <property type="resolution" value="2.55 A"/>
    <property type="chains" value="B7/D7=1-49"/>
</dbReference>
<dbReference type="PDB" id="4W2H">
    <property type="method" value="X-ray"/>
    <property type="resolution" value="2.70 A"/>
    <property type="chains" value="B7/D7=1-49"/>
</dbReference>
<dbReference type="PDB" id="4W2I">
    <property type="method" value="X-ray"/>
    <property type="resolution" value="2.70 A"/>
    <property type="chains" value="B7/D7=1-49"/>
</dbReference>
<dbReference type="PDB" id="4W4G">
    <property type="method" value="X-ray"/>
    <property type="resolution" value="3.30 A"/>
    <property type="chains" value="R7/Y7=1-49"/>
</dbReference>
<dbReference type="PDB" id="4WPO">
    <property type="method" value="X-ray"/>
    <property type="resolution" value="2.80 A"/>
    <property type="chains" value="A7/C7=1-49"/>
</dbReference>
<dbReference type="PDB" id="4WQ1">
    <property type="method" value="X-ray"/>
    <property type="resolution" value="3.10 A"/>
    <property type="chains" value="L5/P8=1-49"/>
</dbReference>
<dbReference type="PDB" id="4WQF">
    <property type="method" value="X-ray"/>
    <property type="resolution" value="2.80 A"/>
    <property type="chains" value="A7/C7=1-49"/>
</dbReference>
<dbReference type="PDB" id="4WQR">
    <property type="method" value="X-ray"/>
    <property type="resolution" value="3.15 A"/>
    <property type="chains" value="L5/P8=1-49"/>
</dbReference>
<dbReference type="PDB" id="4WQU">
    <property type="method" value="X-ray"/>
    <property type="resolution" value="2.80 A"/>
    <property type="chains" value="A7/C7=1-49"/>
</dbReference>
<dbReference type="PDB" id="4WQY">
    <property type="method" value="X-ray"/>
    <property type="resolution" value="2.80 A"/>
    <property type="chains" value="A7/C7=1-49"/>
</dbReference>
<dbReference type="PDB" id="4WR6">
    <property type="method" value="X-ray"/>
    <property type="resolution" value="3.05 A"/>
    <property type="chains" value="L5/P8=1-49"/>
</dbReference>
<dbReference type="PDB" id="4WRA">
    <property type="method" value="X-ray"/>
    <property type="resolution" value="3.05 A"/>
    <property type="chains" value="L5/P8=1-49"/>
</dbReference>
<dbReference type="PDB" id="4WRO">
    <property type="method" value="X-ray"/>
    <property type="resolution" value="3.05 A"/>
    <property type="chains" value="P8=1-49"/>
</dbReference>
<dbReference type="PDB" id="4WSD">
    <property type="method" value="X-ray"/>
    <property type="resolution" value="2.95 A"/>
    <property type="chains" value="L5/P8=1-49"/>
</dbReference>
<dbReference type="PDB" id="4WSM">
    <property type="method" value="X-ray"/>
    <property type="resolution" value="3.30 A"/>
    <property type="chains" value="L5/P8=1-49"/>
</dbReference>
<dbReference type="PDB" id="4WT1">
    <property type="method" value="X-ray"/>
    <property type="resolution" value="3.05 A"/>
    <property type="chains" value="L5/P8=1-49"/>
</dbReference>
<dbReference type="PDB" id="4WT8">
    <property type="method" value="X-ray"/>
    <property type="resolution" value="3.40 A"/>
    <property type="chains" value="C8/D8=1-48"/>
</dbReference>
<dbReference type="PDB" id="4WU1">
    <property type="method" value="X-ray"/>
    <property type="resolution" value="3.20 A"/>
    <property type="chains" value="L5/P8=1-49"/>
</dbReference>
<dbReference type="PDB" id="4WZD">
    <property type="method" value="X-ray"/>
    <property type="resolution" value="3.10 A"/>
    <property type="chains" value="L5/P8=1-49"/>
</dbReference>
<dbReference type="PDB" id="4WZO">
    <property type="method" value="X-ray"/>
    <property type="resolution" value="3.30 A"/>
    <property type="chains" value="L5/P8=1-49"/>
</dbReference>
<dbReference type="PDB" id="4XEJ">
    <property type="method" value="X-ray"/>
    <property type="resolution" value="3.80 A"/>
    <property type="chains" value="AL34/BL34=1-48"/>
</dbReference>
<dbReference type="PDB" id="4Y4O">
    <property type="method" value="X-ray"/>
    <property type="resolution" value="2.30 A"/>
    <property type="chains" value="17/27=1-49"/>
</dbReference>
<dbReference type="PDB" id="4Y4P">
    <property type="method" value="X-ray"/>
    <property type="resolution" value="2.50 A"/>
    <property type="chains" value="17/27=1-49"/>
</dbReference>
<dbReference type="PDB" id="4YPB">
    <property type="method" value="X-ray"/>
    <property type="resolution" value="3.40 A"/>
    <property type="chains" value="R7/Y7=1-49"/>
</dbReference>
<dbReference type="PDB" id="4YZV">
    <property type="method" value="X-ray"/>
    <property type="resolution" value="3.10 A"/>
    <property type="chains" value="R7/Y7=1-49"/>
</dbReference>
<dbReference type="PDB" id="4Z3S">
    <property type="method" value="X-ray"/>
    <property type="resolution" value="2.65 A"/>
    <property type="chains" value="17/27=1-49"/>
</dbReference>
<dbReference type="PDB" id="4Z8C">
    <property type="method" value="X-ray"/>
    <property type="resolution" value="2.90 A"/>
    <property type="chains" value="17/27=1-49"/>
</dbReference>
<dbReference type="PDB" id="4ZER">
    <property type="method" value="X-ray"/>
    <property type="resolution" value="3.10 A"/>
    <property type="chains" value="17/27=1-48"/>
</dbReference>
<dbReference type="PDB" id="4ZSN">
    <property type="method" value="X-ray"/>
    <property type="resolution" value="3.60 A"/>
    <property type="chains" value="R7/Y7=1-49"/>
</dbReference>
<dbReference type="PDB" id="5A9Z">
    <property type="method" value="EM"/>
    <property type="resolution" value="4.70 A"/>
    <property type="chains" value="Ad=1-49"/>
</dbReference>
<dbReference type="PDB" id="5AA0">
    <property type="method" value="EM"/>
    <property type="resolution" value="5.00 A"/>
    <property type="chains" value="Ad=1-49"/>
</dbReference>
<dbReference type="PDB" id="5CZP">
    <property type="method" value="X-ray"/>
    <property type="resolution" value="3.30 A"/>
    <property type="chains" value="R7/Y7=1-49"/>
</dbReference>
<dbReference type="PDB" id="5D8B">
    <property type="method" value="X-ray"/>
    <property type="resolution" value="3.63 A"/>
    <property type="chains" value="AA/WB=1-49"/>
</dbReference>
<dbReference type="PDB" id="5DFE">
    <property type="method" value="X-ray"/>
    <property type="resolution" value="3.10 A"/>
    <property type="chains" value="R7/Y7=1-49"/>
</dbReference>
<dbReference type="PDB" id="5DOX">
    <property type="method" value="X-ray"/>
    <property type="resolution" value="3.10 A"/>
    <property type="chains" value="17/27=1-49"/>
</dbReference>
<dbReference type="PDB" id="5DOY">
    <property type="method" value="X-ray"/>
    <property type="resolution" value="2.60 A"/>
    <property type="chains" value="17/27=1-49"/>
</dbReference>
<dbReference type="PDB" id="5E7K">
    <property type="method" value="X-ray"/>
    <property type="resolution" value="3.20 A"/>
    <property type="chains" value="L5/P8=1-49"/>
</dbReference>
<dbReference type="PDB" id="5E81">
    <property type="method" value="X-ray"/>
    <property type="resolution" value="2.95 A"/>
    <property type="chains" value="L5/P8=1-49"/>
</dbReference>
<dbReference type="PDB" id="5EL4">
    <property type="method" value="X-ray"/>
    <property type="resolution" value="3.15 A"/>
    <property type="chains" value="L5/P8=1-49"/>
</dbReference>
<dbReference type="PDB" id="5EL5">
    <property type="method" value="X-ray"/>
    <property type="resolution" value="3.15 A"/>
    <property type="chains" value="L5/P8=1-49"/>
</dbReference>
<dbReference type="PDB" id="5EL6">
    <property type="method" value="X-ray"/>
    <property type="resolution" value="3.10 A"/>
    <property type="chains" value="L5/P8=1-49"/>
</dbReference>
<dbReference type="PDB" id="5EL7">
    <property type="method" value="X-ray"/>
    <property type="resolution" value="3.15 A"/>
    <property type="chains" value="L5/P8=1-49"/>
</dbReference>
<dbReference type="PDB" id="5F8K">
    <property type="method" value="X-ray"/>
    <property type="resolution" value="2.80 A"/>
    <property type="chains" value="17/27=1-48"/>
</dbReference>
<dbReference type="PDB" id="5FDU">
    <property type="method" value="X-ray"/>
    <property type="resolution" value="2.90 A"/>
    <property type="chains" value="17/27=1-48"/>
</dbReference>
<dbReference type="PDB" id="5FDV">
    <property type="method" value="X-ray"/>
    <property type="resolution" value="2.80 A"/>
    <property type="chains" value="17/27=1-48"/>
</dbReference>
<dbReference type="PDB" id="5HAU">
    <property type="method" value="X-ray"/>
    <property type="resolution" value="3.00 A"/>
    <property type="chains" value="15/25=1-49"/>
</dbReference>
<dbReference type="PDB" id="5HCP">
    <property type="method" value="X-ray"/>
    <property type="resolution" value="2.89 A"/>
    <property type="chains" value="17/27=1-49"/>
</dbReference>
<dbReference type="PDB" id="5HCQ">
    <property type="method" value="X-ray"/>
    <property type="resolution" value="2.80 A"/>
    <property type="chains" value="17/27=1-49"/>
</dbReference>
<dbReference type="PDB" id="5HCR">
    <property type="method" value="X-ray"/>
    <property type="resolution" value="2.80 A"/>
    <property type="chains" value="17/27=1-49"/>
</dbReference>
<dbReference type="PDB" id="5HD1">
    <property type="method" value="X-ray"/>
    <property type="resolution" value="2.70 A"/>
    <property type="chains" value="17/27=1-49"/>
</dbReference>
<dbReference type="PDB" id="5IB7">
    <property type="method" value="X-ray"/>
    <property type="resolution" value="2.99 A"/>
    <property type="chains" value="L5/P8=1-49"/>
</dbReference>
<dbReference type="PDB" id="5IB8">
    <property type="method" value="X-ray"/>
    <property type="resolution" value="3.13 A"/>
    <property type="chains" value="L5/P8=1-49"/>
</dbReference>
<dbReference type="PDB" id="5IBB">
    <property type="method" value="X-ray"/>
    <property type="resolution" value="2.96 A"/>
    <property type="chains" value="L5/P8=1-49"/>
</dbReference>
<dbReference type="PDB" id="5IMQ">
    <property type="method" value="EM"/>
    <property type="resolution" value="3.80 A"/>
    <property type="chains" value="y=1-49"/>
</dbReference>
<dbReference type="PDB" id="5IMR">
    <property type="method" value="EM"/>
    <property type="chains" value="y=1-49"/>
</dbReference>
<dbReference type="PDB" id="5J30">
    <property type="method" value="X-ray"/>
    <property type="resolution" value="3.20 A"/>
    <property type="chains" value="R7/Y7=1-49"/>
</dbReference>
<dbReference type="PDB" id="5J3C">
    <property type="method" value="X-ray"/>
    <property type="resolution" value="3.04 A"/>
    <property type="chains" value="R7/Y7=1-49"/>
</dbReference>
<dbReference type="PDB" id="5J4B">
    <property type="method" value="X-ray"/>
    <property type="resolution" value="2.60 A"/>
    <property type="chains" value="17/27=1-49"/>
</dbReference>
<dbReference type="PDB" id="5J4C">
    <property type="method" value="X-ray"/>
    <property type="resolution" value="2.80 A"/>
    <property type="chains" value="17/27=1-49"/>
</dbReference>
<dbReference type="PDB" id="5J4D">
    <property type="method" value="X-ray"/>
    <property type="resolution" value="3.10 A"/>
    <property type="chains" value="EA/JC=1-49"/>
</dbReference>
<dbReference type="PDB" id="5J8B">
    <property type="method" value="X-ray"/>
    <property type="resolution" value="2.60 A"/>
    <property type="chains" value="7=1-49"/>
</dbReference>
<dbReference type="PDB" id="5NDJ">
    <property type="method" value="X-ray"/>
    <property type="resolution" value="3.15 A"/>
    <property type="chains" value="L5/P8=1-49"/>
</dbReference>
<dbReference type="PDB" id="5NDK">
    <property type="method" value="X-ray"/>
    <property type="resolution" value="2.95 A"/>
    <property type="chains" value="L5/P8=1-49"/>
</dbReference>
<dbReference type="PDB" id="5OT7">
    <property type="method" value="EM"/>
    <property type="resolution" value="3.80 A"/>
    <property type="chains" value="c=1-48"/>
</dbReference>
<dbReference type="PDB" id="5UQ7">
    <property type="method" value="EM"/>
    <property type="resolution" value="3.50 A"/>
    <property type="chains" value="7=1-48"/>
</dbReference>
<dbReference type="PDB" id="5UQ8">
    <property type="method" value="EM"/>
    <property type="resolution" value="3.20 A"/>
    <property type="chains" value="7=1-48"/>
</dbReference>
<dbReference type="PDB" id="5V8I">
    <property type="method" value="X-ray"/>
    <property type="resolution" value="3.25 A"/>
    <property type="chains" value="17/27=1-49"/>
</dbReference>
<dbReference type="PDB" id="5VP2">
    <property type="method" value="X-ray"/>
    <property type="resolution" value="2.80 A"/>
    <property type="chains" value="17/27=1-49"/>
</dbReference>
<dbReference type="PDB" id="5VPO">
    <property type="method" value="X-ray"/>
    <property type="resolution" value="3.34 A"/>
    <property type="chains" value="R7/Y7=1-49"/>
</dbReference>
<dbReference type="PDB" id="5VPP">
    <property type="method" value="X-ray"/>
    <property type="resolution" value="3.90 A"/>
    <property type="chains" value="R7/Y7=1-49"/>
</dbReference>
<dbReference type="PDB" id="5W4K">
    <property type="method" value="X-ray"/>
    <property type="resolution" value="2.70 A"/>
    <property type="chains" value="17/27=1-49"/>
</dbReference>
<dbReference type="PDB" id="5WIS">
    <property type="method" value="X-ray"/>
    <property type="resolution" value="2.70 A"/>
    <property type="chains" value="17/27=1-49"/>
</dbReference>
<dbReference type="PDB" id="5WIT">
    <property type="method" value="X-ray"/>
    <property type="resolution" value="2.60 A"/>
    <property type="chains" value="17/27=1-49"/>
</dbReference>
<dbReference type="PDB" id="5ZLU">
    <property type="method" value="EM"/>
    <property type="resolution" value="3.60 A"/>
    <property type="chains" value="z=1-49"/>
</dbReference>
<dbReference type="PDB" id="6B4V">
    <property type="method" value="X-ray"/>
    <property type="resolution" value="3.40 A"/>
    <property type="chains" value="EA/IC=1-49"/>
</dbReference>
<dbReference type="PDB" id="6BOH">
    <property type="method" value="X-ray"/>
    <property type="resolution" value="3.40 A"/>
    <property type="chains" value="EA/JC=1-49"/>
</dbReference>
<dbReference type="PDB" id="6BUW">
    <property type="method" value="X-ray"/>
    <property type="resolution" value="3.50 A"/>
    <property type="chains" value="R7/Y7=1-49"/>
</dbReference>
<dbReference type="PDB" id="6BZ6">
    <property type="method" value="X-ray"/>
    <property type="resolution" value="3.18 A"/>
    <property type="chains" value="R7/Y7=1-49"/>
</dbReference>
<dbReference type="PDB" id="6BZ7">
    <property type="method" value="X-ray"/>
    <property type="resolution" value="3.68 A"/>
    <property type="chains" value="R7/Y7=1-49"/>
</dbReference>
<dbReference type="PDB" id="6BZ8">
    <property type="method" value="X-ray"/>
    <property type="resolution" value="3.74 A"/>
    <property type="chains" value="R7/Y7=1-49"/>
</dbReference>
<dbReference type="PDB" id="6C5L">
    <property type="method" value="X-ray"/>
    <property type="resolution" value="3.20 A"/>
    <property type="chains" value="B7/D7=1-49"/>
</dbReference>
<dbReference type="PDB" id="6CAE">
    <property type="method" value="X-ray"/>
    <property type="resolution" value="2.60 A"/>
    <property type="chains" value="17/27=1-49"/>
</dbReference>
<dbReference type="PDB" id="6CFJ">
    <property type="method" value="X-ray"/>
    <property type="resolution" value="2.80 A"/>
    <property type="chains" value="17/27=1-49"/>
</dbReference>
<dbReference type="PDB" id="6CFK">
    <property type="method" value="X-ray"/>
    <property type="resolution" value="2.70 A"/>
    <property type="chains" value="17/27=1-49"/>
</dbReference>
<dbReference type="PDB" id="6CFL">
    <property type="method" value="X-ray"/>
    <property type="resolution" value="2.60 A"/>
    <property type="chains" value="17/27=1-49"/>
</dbReference>
<dbReference type="PDB" id="6CZR">
    <property type="method" value="X-ray"/>
    <property type="resolution" value="3.14 A"/>
    <property type="chains" value="17/27=1-48"/>
</dbReference>
<dbReference type="PDB" id="6FKR">
    <property type="method" value="X-ray"/>
    <property type="resolution" value="3.20 A"/>
    <property type="chains" value="17/27=1-48"/>
</dbReference>
<dbReference type="PDB" id="6GSJ">
    <property type="method" value="X-ray"/>
    <property type="resolution" value="2.96 A"/>
    <property type="chains" value="L5/P8=1-49"/>
</dbReference>
<dbReference type="PDB" id="6GSK">
    <property type="method" value="X-ray"/>
    <property type="resolution" value="3.36 A"/>
    <property type="chains" value="L5/P8=1-49"/>
</dbReference>
<dbReference type="PDB" id="6GSL">
    <property type="method" value="X-ray"/>
    <property type="resolution" value="3.16 A"/>
    <property type="chains" value="L5/P8=1-49"/>
</dbReference>
<dbReference type="PDB" id="6GZQ">
    <property type="method" value="EM"/>
    <property type="resolution" value="3.28 A"/>
    <property type="chains" value="c1=1-49"/>
</dbReference>
<dbReference type="PDB" id="6GZX">
    <property type="method" value="EM"/>
    <property type="resolution" value="4.57 A"/>
    <property type="chains" value="c1/c2=1-49"/>
</dbReference>
<dbReference type="PDB" id="6GZZ">
    <property type="method" value="EM"/>
    <property type="resolution" value="4.13 A"/>
    <property type="chains" value="c1/c2=1-49"/>
</dbReference>
<dbReference type="PDB" id="6N1D">
    <property type="method" value="X-ray"/>
    <property type="resolution" value="3.20 A"/>
    <property type="chains" value="AL34/BL34=1-49"/>
</dbReference>
<dbReference type="PDB" id="6N9E">
    <property type="method" value="X-ray"/>
    <property type="resolution" value="3.70 A"/>
    <property type="chains" value="17/27=1-49"/>
</dbReference>
<dbReference type="PDB" id="6N9F">
    <property type="method" value="X-ray"/>
    <property type="resolution" value="3.70 A"/>
    <property type="chains" value="17/27=1-49"/>
</dbReference>
<dbReference type="PDB" id="6ND5">
    <property type="method" value="X-ray"/>
    <property type="resolution" value="2.60 A"/>
    <property type="chains" value="17/27=1-49"/>
</dbReference>
<dbReference type="PDB" id="6ND6">
    <property type="method" value="X-ray"/>
    <property type="resolution" value="2.85 A"/>
    <property type="chains" value="17/27=1-49"/>
</dbReference>
<dbReference type="PDB" id="6NDK">
    <property type="method" value="X-ray"/>
    <property type="resolution" value="3.64 A"/>
    <property type="chains" value="R7/Y7=1-49"/>
</dbReference>
<dbReference type="PDB" id="6NSH">
    <property type="method" value="X-ray"/>
    <property type="resolution" value="3.40 A"/>
    <property type="chains" value="R7/Y7=1-49"/>
</dbReference>
<dbReference type="PDB" id="6NTA">
    <property type="method" value="X-ray"/>
    <property type="resolution" value="3.10 A"/>
    <property type="chains" value="R7/Y7=1-49"/>
</dbReference>
<dbReference type="PDB" id="6NUO">
    <property type="method" value="X-ray"/>
    <property type="resolution" value="3.20 A"/>
    <property type="chains" value="R7/Y7=1-49"/>
</dbReference>
<dbReference type="PDB" id="6NWY">
    <property type="method" value="X-ray"/>
    <property type="resolution" value="3.50 A"/>
    <property type="chains" value="R7/Y7=1-49"/>
</dbReference>
<dbReference type="PDB" id="6O3M">
    <property type="method" value="X-ray"/>
    <property type="resolution" value="3.97 A"/>
    <property type="chains" value="R7/Y7=1-49"/>
</dbReference>
<dbReference type="PDB" id="6O97">
    <property type="method" value="X-ray"/>
    <property type="resolution" value="2.75 A"/>
    <property type="chains" value="17/27=1-49"/>
</dbReference>
<dbReference type="PDB" id="6OF1">
    <property type="method" value="X-ray"/>
    <property type="resolution" value="2.80 A"/>
    <property type="chains" value="17/27=1-49"/>
</dbReference>
<dbReference type="PDB" id="6OF6">
    <property type="method" value="X-ray"/>
    <property type="resolution" value="3.20 A"/>
    <property type="chains" value="R7/Y7=1-49"/>
</dbReference>
<dbReference type="PDB" id="6OJ2">
    <property type="method" value="X-ray"/>
    <property type="resolution" value="3.20 A"/>
    <property type="chains" value="R7/Y7=1-49"/>
</dbReference>
<dbReference type="PDB" id="6OPE">
    <property type="method" value="X-ray"/>
    <property type="resolution" value="3.10 A"/>
    <property type="chains" value="R7/Y7=1-49"/>
</dbReference>
<dbReference type="PDB" id="6ORD">
    <property type="method" value="X-ray"/>
    <property type="resolution" value="3.10 A"/>
    <property type="chains" value="R7/Y7=1-49"/>
</dbReference>
<dbReference type="PDB" id="6OSI">
    <property type="method" value="X-ray"/>
    <property type="resolution" value="4.14 A"/>
    <property type="chains" value="R7/Y7=1-49"/>
</dbReference>
<dbReference type="PDB" id="6OTR">
    <property type="method" value="X-ray"/>
    <property type="resolution" value="3.12 A"/>
    <property type="chains" value="R7/Y7=1-49"/>
</dbReference>
<dbReference type="PDB" id="6OXA">
    <property type="method" value="X-ray"/>
    <property type="resolution" value="3.25 A"/>
    <property type="chains" value="R7/Y7=1-49"/>
</dbReference>
<dbReference type="PDB" id="6OXI">
    <property type="method" value="X-ray"/>
    <property type="resolution" value="3.50 A"/>
    <property type="chains" value="R7/Y7=1-49"/>
</dbReference>
<dbReference type="PDB" id="6Q95">
    <property type="method" value="EM"/>
    <property type="resolution" value="3.70 A"/>
    <property type="chains" value="d=1-49"/>
</dbReference>
<dbReference type="PDB" id="6QNQ">
    <property type="method" value="X-ray"/>
    <property type="resolution" value="3.50 A"/>
    <property type="chains" value="L5/P8=1-49"/>
</dbReference>
<dbReference type="PDB" id="6QNR">
    <property type="method" value="X-ray"/>
    <property type="resolution" value="3.10 A"/>
    <property type="chains" value="L5/P8=1-49"/>
</dbReference>
<dbReference type="PDB" id="6UCQ">
    <property type="method" value="X-ray"/>
    <property type="resolution" value="3.50 A"/>
    <property type="chains" value="17/27=1-49"/>
</dbReference>
<dbReference type="PDB" id="6UO1">
    <property type="method" value="X-ray"/>
    <property type="resolution" value="2.95 A"/>
    <property type="chains" value="17/27=1-49"/>
</dbReference>
<dbReference type="PDB" id="6XHV">
    <property type="method" value="X-ray"/>
    <property type="resolution" value="2.40 A"/>
    <property type="chains" value="17/27=1-49"/>
</dbReference>
<dbReference type="PDB" id="6XHW">
    <property type="method" value="X-ray"/>
    <property type="resolution" value="2.50 A"/>
    <property type="chains" value="17/27=1-49"/>
</dbReference>
<dbReference type="PDB" id="6XHX">
    <property type="method" value="X-ray"/>
    <property type="resolution" value="2.55 A"/>
    <property type="chains" value="17/27=1-49"/>
</dbReference>
<dbReference type="PDB" id="6XHY">
    <property type="method" value="X-ray"/>
    <property type="resolution" value="2.60 A"/>
    <property type="chains" value="17/27=1-49"/>
</dbReference>
<dbReference type="PDB" id="6XQD">
    <property type="method" value="X-ray"/>
    <property type="resolution" value="2.80 A"/>
    <property type="chains" value="17/27=1-49"/>
</dbReference>
<dbReference type="PDB" id="6XQE">
    <property type="method" value="X-ray"/>
    <property type="resolution" value="3.00 A"/>
    <property type="chains" value="17/27=1-49"/>
</dbReference>
<dbReference type="PDB" id="7AZO">
    <property type="method" value="X-ray"/>
    <property type="resolution" value="3.30 A"/>
    <property type="chains" value="L34A/L34B=1-49"/>
</dbReference>
<dbReference type="PDB" id="7AZS">
    <property type="method" value="X-ray"/>
    <property type="resolution" value="3.10 A"/>
    <property type="chains" value="L34A/L34B=1-49"/>
</dbReference>
<dbReference type="PDB" id="7JQL">
    <property type="method" value="X-ray"/>
    <property type="resolution" value="3.00 A"/>
    <property type="chains" value="17/27=1-49"/>
</dbReference>
<dbReference type="PDB" id="7JQM">
    <property type="method" value="X-ray"/>
    <property type="resolution" value="3.05 A"/>
    <property type="chains" value="17/27=1-49"/>
</dbReference>
<dbReference type="PDB" id="7LH5">
    <property type="method" value="X-ray"/>
    <property type="resolution" value="3.27 A"/>
    <property type="chains" value="B7/D7=1-49"/>
</dbReference>
<dbReference type="PDB" id="7MD7">
    <property type="method" value="X-ray"/>
    <property type="resolution" value="2.80 A"/>
    <property type="chains" value="17/27=1-49"/>
</dbReference>
<dbReference type="PDB" id="7RQ8">
    <property type="method" value="X-ray"/>
    <property type="resolution" value="2.50 A"/>
    <property type="chains" value="17/27=1-49"/>
</dbReference>
<dbReference type="PDB" id="7RQ9">
    <property type="method" value="X-ray"/>
    <property type="resolution" value="2.60 A"/>
    <property type="chains" value="17/27=1-49"/>
</dbReference>
<dbReference type="PDB" id="7RQA">
    <property type="method" value="X-ray"/>
    <property type="resolution" value="2.40 A"/>
    <property type="chains" value="17/27=1-49"/>
</dbReference>
<dbReference type="PDB" id="7RQB">
    <property type="method" value="X-ray"/>
    <property type="resolution" value="2.45 A"/>
    <property type="chains" value="17/27=1-49"/>
</dbReference>
<dbReference type="PDB" id="7RQC">
    <property type="method" value="X-ray"/>
    <property type="resolution" value="2.50 A"/>
    <property type="chains" value="17/27=1-49"/>
</dbReference>
<dbReference type="PDB" id="7RQD">
    <property type="method" value="X-ray"/>
    <property type="resolution" value="2.50 A"/>
    <property type="chains" value="17/27=1-49"/>
</dbReference>
<dbReference type="PDB" id="7RQE">
    <property type="method" value="X-ray"/>
    <property type="resolution" value="2.40 A"/>
    <property type="chains" value="17/27=1-49"/>
</dbReference>
<dbReference type="PDB" id="7U2H">
    <property type="method" value="X-ray"/>
    <property type="resolution" value="2.55 A"/>
    <property type="chains" value="17/27=1-49"/>
</dbReference>
<dbReference type="PDB" id="7U2I">
    <property type="method" value="X-ray"/>
    <property type="resolution" value="2.55 A"/>
    <property type="chains" value="17/27=1-49"/>
</dbReference>
<dbReference type="PDB" id="7U2J">
    <property type="method" value="X-ray"/>
    <property type="resolution" value="2.55 A"/>
    <property type="chains" value="17/27=1-49"/>
</dbReference>
<dbReference type="PDB" id="8CVJ">
    <property type="method" value="X-ray"/>
    <property type="resolution" value="2.40 A"/>
    <property type="chains" value="17/27=1-49"/>
</dbReference>
<dbReference type="PDB" id="8CVK">
    <property type="method" value="X-ray"/>
    <property type="resolution" value="2.50 A"/>
    <property type="chains" value="17/27=1-49"/>
</dbReference>
<dbReference type="PDB" id="8CVL">
    <property type="method" value="X-ray"/>
    <property type="resolution" value="2.30 A"/>
    <property type="chains" value="17/27=1-49"/>
</dbReference>
<dbReference type="PDB" id="8EKB">
    <property type="method" value="X-ray"/>
    <property type="resolution" value="2.70 A"/>
    <property type="chains" value="17/27=1-49"/>
</dbReference>
<dbReference type="PDB" id="8EV6">
    <property type="method" value="X-ray"/>
    <property type="resolution" value="2.95 A"/>
    <property type="chains" value="17/27=1-49"/>
</dbReference>
<dbReference type="PDB" id="8EV7">
    <property type="method" value="X-ray"/>
    <property type="resolution" value="2.89 A"/>
    <property type="chains" value="17/27=1-49"/>
</dbReference>
<dbReference type="PDB" id="8FC1">
    <property type="method" value="X-ray"/>
    <property type="resolution" value="2.50 A"/>
    <property type="chains" value="17/27=1-49"/>
</dbReference>
<dbReference type="PDB" id="8FC2">
    <property type="method" value="X-ray"/>
    <property type="resolution" value="2.50 A"/>
    <property type="chains" value="17/27=1-49"/>
</dbReference>
<dbReference type="PDB" id="8FC3">
    <property type="method" value="X-ray"/>
    <property type="resolution" value="2.60 A"/>
    <property type="chains" value="17/27=1-49"/>
</dbReference>
<dbReference type="PDB" id="8FC4">
    <property type="method" value="X-ray"/>
    <property type="resolution" value="2.45 A"/>
    <property type="chains" value="17/27=1-49"/>
</dbReference>
<dbReference type="PDB" id="8FC5">
    <property type="method" value="X-ray"/>
    <property type="resolution" value="2.65 A"/>
    <property type="chains" value="17/27=1-49"/>
</dbReference>
<dbReference type="PDB" id="8FC6">
    <property type="method" value="X-ray"/>
    <property type="resolution" value="2.35 A"/>
    <property type="chains" value="17/27=1-49"/>
</dbReference>
<dbReference type="PDB" id="8FOM">
    <property type="method" value="X-ray"/>
    <property type="resolution" value="3.58 A"/>
    <property type="chains" value="R7/Y7=1-49"/>
</dbReference>
<dbReference type="PDB" id="8FON">
    <property type="method" value="X-ray"/>
    <property type="resolution" value="3.64 A"/>
    <property type="chains" value="R7/Y7=1-49"/>
</dbReference>
<dbReference type="PDB" id="8G29">
    <property type="method" value="X-ray"/>
    <property type="resolution" value="2.55 A"/>
    <property type="chains" value="17/27=1-49"/>
</dbReference>
<dbReference type="PDB" id="8G2A">
    <property type="method" value="X-ray"/>
    <property type="resolution" value="2.45 A"/>
    <property type="chains" value="17/27=1-49"/>
</dbReference>
<dbReference type="PDB" id="8G2B">
    <property type="method" value="X-ray"/>
    <property type="resolution" value="2.55 A"/>
    <property type="chains" value="17/27=1-49"/>
</dbReference>
<dbReference type="PDB" id="8G2C">
    <property type="method" value="X-ray"/>
    <property type="resolution" value="2.65 A"/>
    <property type="chains" value="17/27=1-49"/>
</dbReference>
<dbReference type="PDB" id="8G2D">
    <property type="method" value="X-ray"/>
    <property type="resolution" value="2.70 A"/>
    <property type="chains" value="17/27=1-49"/>
</dbReference>
<dbReference type="PDB" id="8T8B">
    <property type="method" value="X-ray"/>
    <property type="resolution" value="2.65 A"/>
    <property type="chains" value="17/27=1-49"/>
</dbReference>
<dbReference type="PDB" id="8T8C">
    <property type="method" value="X-ray"/>
    <property type="resolution" value="2.60 A"/>
    <property type="chains" value="17/27=1-49"/>
</dbReference>
<dbReference type="PDB" id="8UD6">
    <property type="method" value="X-ray"/>
    <property type="resolution" value="2.70 A"/>
    <property type="chains" value="17/27=1-49"/>
</dbReference>
<dbReference type="PDB" id="8UD7">
    <property type="method" value="X-ray"/>
    <property type="resolution" value="2.55 A"/>
    <property type="chains" value="17/27=1-49"/>
</dbReference>
<dbReference type="PDB" id="8UD8">
    <property type="method" value="X-ray"/>
    <property type="resolution" value="2.60 A"/>
    <property type="chains" value="17/27=1-49"/>
</dbReference>
<dbReference type="PDB" id="8UVR">
    <property type="method" value="X-ray"/>
    <property type="resolution" value="2.60 A"/>
    <property type="chains" value="17/27=1-49"/>
</dbReference>
<dbReference type="PDB" id="8UVS">
    <property type="method" value="X-ray"/>
    <property type="resolution" value="2.75 A"/>
    <property type="chains" value="17/27=1-49"/>
</dbReference>
<dbReference type="PDB" id="8VTU">
    <property type="method" value="X-ray"/>
    <property type="resolution" value="2.40 A"/>
    <property type="chains" value="17/27=1-49"/>
</dbReference>
<dbReference type="PDB" id="8VTV">
    <property type="method" value="X-ray"/>
    <property type="resolution" value="2.55 A"/>
    <property type="chains" value="17/27=1-49"/>
</dbReference>
<dbReference type="PDB" id="8VTW">
    <property type="method" value="X-ray"/>
    <property type="resolution" value="2.35 A"/>
    <property type="chains" value="17/27=1-49"/>
</dbReference>
<dbReference type="PDB" id="8VTX">
    <property type="method" value="X-ray"/>
    <property type="resolution" value="2.40 A"/>
    <property type="chains" value="17/27=1-49"/>
</dbReference>
<dbReference type="PDB" id="8VTY">
    <property type="method" value="X-ray"/>
    <property type="resolution" value="2.60 A"/>
    <property type="chains" value="17/27=1-49"/>
</dbReference>
<dbReference type="PDB" id="8WV1">
    <property type="method" value="X-ray"/>
    <property type="resolution" value="3.99 A"/>
    <property type="chains" value="2/7=1-49"/>
</dbReference>
<dbReference type="PDB" id="9B00">
    <property type="method" value="X-ray"/>
    <property type="resolution" value="2.80 A"/>
    <property type="chains" value="17/27=1-49"/>
</dbReference>
<dbReference type="PDB" id="9D0J">
    <property type="method" value="X-ray"/>
    <property type="resolution" value="2.50 A"/>
    <property type="chains" value="17/27=1-49"/>
</dbReference>
<dbReference type="PDB" id="9D7R">
    <property type="method" value="X-ray"/>
    <property type="resolution" value="2.70 A"/>
    <property type="chains" value="17/27=1-49"/>
</dbReference>
<dbReference type="PDB" id="9D7S">
    <property type="method" value="X-ray"/>
    <property type="resolution" value="2.85 A"/>
    <property type="chains" value="17/27=1-49"/>
</dbReference>
<dbReference type="PDB" id="9D7T">
    <property type="method" value="X-ray"/>
    <property type="resolution" value="2.70 A"/>
    <property type="chains" value="17/27=1-49"/>
</dbReference>
<dbReference type="PDB" id="9DFC">
    <property type="method" value="X-ray"/>
    <property type="resolution" value="2.50 A"/>
    <property type="chains" value="17/27=1-49"/>
</dbReference>
<dbReference type="PDB" id="9DFD">
    <property type="method" value="X-ray"/>
    <property type="resolution" value="2.60 A"/>
    <property type="chains" value="17/27=1-49"/>
</dbReference>
<dbReference type="PDB" id="9DFE">
    <property type="method" value="X-ray"/>
    <property type="resolution" value="2.60 A"/>
    <property type="chains" value="17/27=1-49"/>
</dbReference>
<dbReference type="PDBsum" id="1VVJ"/>
<dbReference type="PDBsum" id="1VY4"/>
<dbReference type="PDBsum" id="1VY5"/>
<dbReference type="PDBsum" id="1VY6"/>
<dbReference type="PDBsum" id="1VY7"/>
<dbReference type="PDBsum" id="4L47"/>
<dbReference type="PDBsum" id="4L71"/>
<dbReference type="PDBsum" id="4LEL"/>
<dbReference type="PDBsum" id="4LFZ"/>
<dbReference type="PDBsum" id="4LNT"/>
<dbReference type="PDBsum" id="4LSK"/>
<dbReference type="PDBsum" id="4LT8"/>
<dbReference type="PDBsum" id="4P6F"/>
<dbReference type="PDBsum" id="4P70"/>
<dbReference type="PDBsum" id="4TUA"/>
<dbReference type="PDBsum" id="4TUB"/>
<dbReference type="PDBsum" id="4TUC"/>
<dbReference type="PDBsum" id="4TUD"/>
<dbReference type="PDBsum" id="4TUE"/>
<dbReference type="PDBsum" id="4V4I"/>
<dbReference type="PDBsum" id="4V4J"/>
<dbReference type="PDBsum" id="4V4X"/>
<dbReference type="PDBsum" id="4V4Y"/>
<dbReference type="PDBsum" id="4V4Z"/>
<dbReference type="PDBsum" id="4V51"/>
<dbReference type="PDBsum" id="4V5A"/>
<dbReference type="PDBsum" id="4V5C"/>
<dbReference type="PDBsum" id="4V5D"/>
<dbReference type="PDBsum" id="4V5E"/>
<dbReference type="PDBsum" id="4V5F"/>
<dbReference type="PDBsum" id="4V5G"/>
<dbReference type="PDBsum" id="4V5J"/>
<dbReference type="PDBsum" id="4V5K"/>
<dbReference type="PDBsum" id="4V5L"/>
<dbReference type="PDBsum" id="4V5M"/>
<dbReference type="PDBsum" id="4V5N"/>
<dbReference type="PDBsum" id="4V5P"/>
<dbReference type="PDBsum" id="4V5Q"/>
<dbReference type="PDBsum" id="4V5R"/>
<dbReference type="PDBsum" id="4V5S"/>
<dbReference type="PDBsum" id="4V63"/>
<dbReference type="PDBsum" id="4V67"/>
<dbReference type="PDBsum" id="4V68"/>
<dbReference type="PDBsum" id="4V6A"/>
<dbReference type="PDBsum" id="4V6F"/>
<dbReference type="PDBsum" id="4V6G"/>
<dbReference type="PDBsum" id="4V7J"/>
<dbReference type="PDBsum" id="4V7K"/>
<dbReference type="PDBsum" id="4V7L"/>
<dbReference type="PDBsum" id="4V7M"/>
<dbReference type="PDBsum" id="4V7P"/>
<dbReference type="PDBsum" id="4V7W"/>
<dbReference type="PDBsum" id="4V7X"/>
<dbReference type="PDBsum" id="4V7Y"/>
<dbReference type="PDBsum" id="4V7Z"/>
<dbReference type="PDBsum" id="4V83"/>
<dbReference type="PDBsum" id="4V84"/>
<dbReference type="PDBsum" id="4V87"/>
<dbReference type="PDBsum" id="4V8A"/>
<dbReference type="PDBsum" id="4V8B"/>
<dbReference type="PDBsum" id="4V8C"/>
<dbReference type="PDBsum" id="4V8D"/>
<dbReference type="PDBsum" id="4V8E"/>
<dbReference type="PDBsum" id="4V8F"/>
<dbReference type="PDBsum" id="4V8G"/>
<dbReference type="PDBsum" id="4V8H"/>
<dbReference type="PDBsum" id="4V8I"/>
<dbReference type="PDBsum" id="4V8J"/>
<dbReference type="PDBsum" id="4V8N"/>
<dbReference type="PDBsum" id="4V8O"/>
<dbReference type="PDBsum" id="4V8Q"/>
<dbReference type="PDBsum" id="4V8U"/>
<dbReference type="PDBsum" id="4V8X"/>
<dbReference type="PDBsum" id="4V90"/>
<dbReference type="PDBsum" id="4V95"/>
<dbReference type="PDBsum" id="4V97"/>
<dbReference type="PDBsum" id="4V9A"/>
<dbReference type="PDBsum" id="4V9B"/>
<dbReference type="PDBsum" id="4V9H"/>
<dbReference type="PDBsum" id="4V9I"/>
<dbReference type="PDBsum" id="4V9J"/>
<dbReference type="PDBsum" id="4V9K"/>
<dbReference type="PDBsum" id="4V9L"/>
<dbReference type="PDBsum" id="4V9M"/>
<dbReference type="PDBsum" id="4V9N"/>
<dbReference type="PDBsum" id="4V9Q"/>
<dbReference type="PDBsum" id="4V9R"/>
<dbReference type="PDBsum" id="4V9S"/>
<dbReference type="PDBsum" id="4W29"/>
<dbReference type="PDBsum" id="4W2E"/>
<dbReference type="PDBsum" id="4W2F"/>
<dbReference type="PDBsum" id="4W2G"/>
<dbReference type="PDBsum" id="4W2H"/>
<dbReference type="PDBsum" id="4W2I"/>
<dbReference type="PDBsum" id="4W4G"/>
<dbReference type="PDBsum" id="4WPO"/>
<dbReference type="PDBsum" id="4WQ1"/>
<dbReference type="PDBsum" id="4WQF"/>
<dbReference type="PDBsum" id="4WQR"/>
<dbReference type="PDBsum" id="4WQU"/>
<dbReference type="PDBsum" id="4WQY"/>
<dbReference type="PDBsum" id="4WR6"/>
<dbReference type="PDBsum" id="4WRA"/>
<dbReference type="PDBsum" id="4WRO"/>
<dbReference type="PDBsum" id="4WSD"/>
<dbReference type="PDBsum" id="4WSM"/>
<dbReference type="PDBsum" id="4WT1"/>
<dbReference type="PDBsum" id="4WT8"/>
<dbReference type="PDBsum" id="4WU1"/>
<dbReference type="PDBsum" id="4WZD"/>
<dbReference type="PDBsum" id="4WZO"/>
<dbReference type="PDBsum" id="4XEJ"/>
<dbReference type="PDBsum" id="4Y4O"/>
<dbReference type="PDBsum" id="4Y4P"/>
<dbReference type="PDBsum" id="4YPB"/>
<dbReference type="PDBsum" id="4YZV"/>
<dbReference type="PDBsum" id="4Z3S"/>
<dbReference type="PDBsum" id="4Z8C"/>
<dbReference type="PDBsum" id="4ZER"/>
<dbReference type="PDBsum" id="4ZSN"/>
<dbReference type="PDBsum" id="5A9Z"/>
<dbReference type="PDBsum" id="5AA0"/>
<dbReference type="PDBsum" id="5CZP"/>
<dbReference type="PDBsum" id="5D8B"/>
<dbReference type="PDBsum" id="5DFE"/>
<dbReference type="PDBsum" id="5DOX"/>
<dbReference type="PDBsum" id="5DOY"/>
<dbReference type="PDBsum" id="5E7K"/>
<dbReference type="PDBsum" id="5E81"/>
<dbReference type="PDBsum" id="5EL4"/>
<dbReference type="PDBsum" id="5EL5"/>
<dbReference type="PDBsum" id="5EL6"/>
<dbReference type="PDBsum" id="5EL7"/>
<dbReference type="PDBsum" id="5F8K"/>
<dbReference type="PDBsum" id="5FDU"/>
<dbReference type="PDBsum" id="5FDV"/>
<dbReference type="PDBsum" id="5HAU"/>
<dbReference type="PDBsum" id="5HCP"/>
<dbReference type="PDBsum" id="5HCQ"/>
<dbReference type="PDBsum" id="5HCR"/>
<dbReference type="PDBsum" id="5HD1"/>
<dbReference type="PDBsum" id="5IB7"/>
<dbReference type="PDBsum" id="5IB8"/>
<dbReference type="PDBsum" id="5IBB"/>
<dbReference type="PDBsum" id="5IMQ"/>
<dbReference type="PDBsum" id="5IMR"/>
<dbReference type="PDBsum" id="5J30"/>
<dbReference type="PDBsum" id="5J3C"/>
<dbReference type="PDBsum" id="5J4B"/>
<dbReference type="PDBsum" id="5J4C"/>
<dbReference type="PDBsum" id="5J4D"/>
<dbReference type="PDBsum" id="5J8B"/>
<dbReference type="PDBsum" id="5NDJ"/>
<dbReference type="PDBsum" id="5NDK"/>
<dbReference type="PDBsum" id="5OT7"/>
<dbReference type="PDBsum" id="5UQ7"/>
<dbReference type="PDBsum" id="5UQ8"/>
<dbReference type="PDBsum" id="5V8I"/>
<dbReference type="PDBsum" id="5VP2"/>
<dbReference type="PDBsum" id="5VPO"/>
<dbReference type="PDBsum" id="5VPP"/>
<dbReference type="PDBsum" id="5W4K"/>
<dbReference type="PDBsum" id="5WIS"/>
<dbReference type="PDBsum" id="5WIT"/>
<dbReference type="PDBsum" id="5ZLU"/>
<dbReference type="PDBsum" id="6B4V"/>
<dbReference type="PDBsum" id="6BOH"/>
<dbReference type="PDBsum" id="6BUW"/>
<dbReference type="PDBsum" id="6BZ6"/>
<dbReference type="PDBsum" id="6BZ7"/>
<dbReference type="PDBsum" id="6BZ8"/>
<dbReference type="PDBsum" id="6C5L"/>
<dbReference type="PDBsum" id="6CAE"/>
<dbReference type="PDBsum" id="6CFJ"/>
<dbReference type="PDBsum" id="6CFK"/>
<dbReference type="PDBsum" id="6CFL"/>
<dbReference type="PDBsum" id="6CZR"/>
<dbReference type="PDBsum" id="6FKR"/>
<dbReference type="PDBsum" id="6GSJ"/>
<dbReference type="PDBsum" id="6GSK"/>
<dbReference type="PDBsum" id="6GSL"/>
<dbReference type="PDBsum" id="6GZQ"/>
<dbReference type="PDBsum" id="6GZX"/>
<dbReference type="PDBsum" id="6GZZ"/>
<dbReference type="PDBsum" id="6N1D"/>
<dbReference type="PDBsum" id="6N9E"/>
<dbReference type="PDBsum" id="6N9F"/>
<dbReference type="PDBsum" id="6ND5"/>
<dbReference type="PDBsum" id="6ND6"/>
<dbReference type="PDBsum" id="6NDK"/>
<dbReference type="PDBsum" id="6NSH"/>
<dbReference type="PDBsum" id="6NTA"/>
<dbReference type="PDBsum" id="6NUO"/>
<dbReference type="PDBsum" id="6NWY"/>
<dbReference type="PDBsum" id="6O3M"/>
<dbReference type="PDBsum" id="6O97"/>
<dbReference type="PDBsum" id="6OF1"/>
<dbReference type="PDBsum" id="6OF6"/>
<dbReference type="PDBsum" id="6OJ2"/>
<dbReference type="PDBsum" id="6OPE"/>
<dbReference type="PDBsum" id="6ORD"/>
<dbReference type="PDBsum" id="6OSI"/>
<dbReference type="PDBsum" id="6OTR"/>
<dbReference type="PDBsum" id="6OXA"/>
<dbReference type="PDBsum" id="6OXI"/>
<dbReference type="PDBsum" id="6Q95"/>
<dbReference type="PDBsum" id="6QNQ"/>
<dbReference type="PDBsum" id="6QNR"/>
<dbReference type="PDBsum" id="6UCQ"/>
<dbReference type="PDBsum" id="6UO1"/>
<dbReference type="PDBsum" id="6XHV"/>
<dbReference type="PDBsum" id="6XHW"/>
<dbReference type="PDBsum" id="6XHX"/>
<dbReference type="PDBsum" id="6XHY"/>
<dbReference type="PDBsum" id="6XQD"/>
<dbReference type="PDBsum" id="6XQE"/>
<dbReference type="PDBsum" id="7AZO"/>
<dbReference type="PDBsum" id="7AZS"/>
<dbReference type="PDBsum" id="7JQL"/>
<dbReference type="PDBsum" id="7JQM"/>
<dbReference type="PDBsum" id="7LH5"/>
<dbReference type="PDBsum" id="7MD7"/>
<dbReference type="PDBsum" id="7RQ8"/>
<dbReference type="PDBsum" id="7RQ9"/>
<dbReference type="PDBsum" id="7RQA"/>
<dbReference type="PDBsum" id="7RQB"/>
<dbReference type="PDBsum" id="7RQC"/>
<dbReference type="PDBsum" id="7RQD"/>
<dbReference type="PDBsum" id="7RQE"/>
<dbReference type="PDBsum" id="7U2H"/>
<dbReference type="PDBsum" id="7U2I"/>
<dbReference type="PDBsum" id="7U2J"/>
<dbReference type="PDBsum" id="8CVJ"/>
<dbReference type="PDBsum" id="8CVK"/>
<dbReference type="PDBsum" id="8CVL"/>
<dbReference type="PDBsum" id="8EKB"/>
<dbReference type="PDBsum" id="8EV6"/>
<dbReference type="PDBsum" id="8EV7"/>
<dbReference type="PDBsum" id="8FC1"/>
<dbReference type="PDBsum" id="8FC2"/>
<dbReference type="PDBsum" id="8FC3"/>
<dbReference type="PDBsum" id="8FC4"/>
<dbReference type="PDBsum" id="8FC5"/>
<dbReference type="PDBsum" id="8FC6"/>
<dbReference type="PDBsum" id="8FOM"/>
<dbReference type="PDBsum" id="8FON"/>
<dbReference type="PDBsum" id="8G29"/>
<dbReference type="PDBsum" id="8G2A"/>
<dbReference type="PDBsum" id="8G2B"/>
<dbReference type="PDBsum" id="8G2C"/>
<dbReference type="PDBsum" id="8G2D"/>
<dbReference type="PDBsum" id="8T8B"/>
<dbReference type="PDBsum" id="8T8C"/>
<dbReference type="PDBsum" id="8UD6"/>
<dbReference type="PDBsum" id="8UD7"/>
<dbReference type="PDBsum" id="8UD8"/>
<dbReference type="PDBsum" id="8UVR"/>
<dbReference type="PDBsum" id="8UVS"/>
<dbReference type="PDBsum" id="8VTU"/>
<dbReference type="PDBsum" id="8VTV"/>
<dbReference type="PDBsum" id="8VTW"/>
<dbReference type="PDBsum" id="8VTX"/>
<dbReference type="PDBsum" id="8VTY"/>
<dbReference type="PDBsum" id="8WV1"/>
<dbReference type="PDBsum" id="9B00"/>
<dbReference type="PDBsum" id="9D0J"/>
<dbReference type="PDBsum" id="9D7R"/>
<dbReference type="PDBsum" id="9D7S"/>
<dbReference type="PDBsum" id="9D7T"/>
<dbReference type="PDBsum" id="9DFC"/>
<dbReference type="PDBsum" id="9DFD"/>
<dbReference type="PDBsum" id="9DFE"/>
<dbReference type="EMDB" id="EMD-0101"/>
<dbReference type="EMDB" id="EMD-0104"/>
<dbReference type="EMDB" id="EMD-0105"/>
<dbReference type="EMDB" id="EMD-3852"/>
<dbReference type="EMDB" id="EMD-4475"/>
<dbReference type="EMDB" id="EMD-6934"/>
<dbReference type="EMDB" id="EMD-8596"/>
<dbReference type="EMDB" id="EMD-8597"/>
<dbReference type="SMR" id="P80340"/>
<dbReference type="IntAct" id="P80340">
    <property type="interactions" value="11"/>
</dbReference>
<dbReference type="EnsemblBacteria" id="BAD70269">
    <property type="protein sequence ID" value="BAD70269"/>
    <property type="gene ID" value="BAD70269"/>
</dbReference>
<dbReference type="GeneID" id="3169919"/>
<dbReference type="KEGG" id="ttj:TTHA0446"/>
<dbReference type="PATRIC" id="fig|300852.9.peg.445"/>
<dbReference type="eggNOG" id="COG0230">
    <property type="taxonomic scope" value="Bacteria"/>
</dbReference>
<dbReference type="HOGENOM" id="CLU_129938_2_0_0"/>
<dbReference type="PhylomeDB" id="P80340"/>
<dbReference type="Proteomes" id="UP000000532">
    <property type="component" value="Chromosome"/>
</dbReference>
<dbReference type="GO" id="GO:1990904">
    <property type="term" value="C:ribonucleoprotein complex"/>
    <property type="evidence" value="ECO:0007669"/>
    <property type="project" value="UniProtKB-KW"/>
</dbReference>
<dbReference type="GO" id="GO:0005840">
    <property type="term" value="C:ribosome"/>
    <property type="evidence" value="ECO:0007669"/>
    <property type="project" value="UniProtKB-KW"/>
</dbReference>
<dbReference type="GO" id="GO:0003735">
    <property type="term" value="F:structural constituent of ribosome"/>
    <property type="evidence" value="ECO:0007669"/>
    <property type="project" value="InterPro"/>
</dbReference>
<dbReference type="GO" id="GO:0006412">
    <property type="term" value="P:translation"/>
    <property type="evidence" value="ECO:0007669"/>
    <property type="project" value="UniProtKB-UniRule"/>
</dbReference>
<dbReference type="FunFam" id="1.10.287.3980:FF:000001">
    <property type="entry name" value="Mitochondrial ribosomal protein L34"/>
    <property type="match status" value="1"/>
</dbReference>
<dbReference type="Gene3D" id="1.10.287.3980">
    <property type="match status" value="1"/>
</dbReference>
<dbReference type="HAMAP" id="MF_00391">
    <property type="entry name" value="Ribosomal_bL34"/>
    <property type="match status" value="1"/>
</dbReference>
<dbReference type="InterPro" id="IPR000271">
    <property type="entry name" value="Ribosomal_bL34"/>
</dbReference>
<dbReference type="InterPro" id="IPR020939">
    <property type="entry name" value="Ribosomal_bL34_CS"/>
</dbReference>
<dbReference type="NCBIfam" id="TIGR01030">
    <property type="entry name" value="rpmH_bact"/>
    <property type="match status" value="1"/>
</dbReference>
<dbReference type="PANTHER" id="PTHR14503:SF4">
    <property type="entry name" value="LARGE RIBOSOMAL SUBUNIT PROTEIN BL34M"/>
    <property type="match status" value="1"/>
</dbReference>
<dbReference type="PANTHER" id="PTHR14503">
    <property type="entry name" value="MITOCHONDRIAL RIBOSOMAL PROTEIN 34 FAMILY MEMBER"/>
    <property type="match status" value="1"/>
</dbReference>
<dbReference type="Pfam" id="PF00468">
    <property type="entry name" value="Ribosomal_L34"/>
    <property type="match status" value="1"/>
</dbReference>
<dbReference type="PROSITE" id="PS00784">
    <property type="entry name" value="RIBOSOMAL_L34"/>
    <property type="match status" value="1"/>
</dbReference>
<feature type="chain" id="PRO_0000187493" description="Large ribosomal subunit protein bL34">
    <location>
        <begin position="1"/>
        <end position="49"/>
    </location>
</feature>
<feature type="region of interest" description="Disordered" evidence="1">
    <location>
        <begin position="26"/>
        <end position="49"/>
    </location>
</feature>
<feature type="compositionally biased region" description="Basic residues" evidence="1">
    <location>
        <begin position="29"/>
        <end position="49"/>
    </location>
</feature>
<feature type="sequence conflict" description="In Ref. 4; AA sequence." evidence="3" ref="4">
    <original>A</original>
    <variation>N</variation>
    <location>
        <position position="13"/>
    </location>
</feature>
<feature type="sequence conflict" description="In Ref. 4; AA sequence." evidence="3" ref="4">
    <original>T</original>
    <variation>N</variation>
    <location>
        <position position="15"/>
    </location>
</feature>
<feature type="helix" evidence="4">
    <location>
        <begin position="9"/>
        <end position="16"/>
    </location>
</feature>
<feature type="helix" evidence="4">
    <location>
        <begin position="18"/>
        <end position="23"/>
    </location>
</feature>
<feature type="helix" evidence="4">
    <location>
        <begin position="25"/>
        <end position="37"/>
    </location>
</feature>
<comment type="function">
    <text>Found on the solvent side of the large subunit.</text>
</comment>
<comment type="subunit">
    <text>Part of the 50S ribosomal subunit.</text>
</comment>
<comment type="mass spectrometry"/>
<comment type="miscellaneous">
    <text>The open reading frame (ORF) for this protein is entirely within the ORF for the RNase P protein (RnaP). The two start codons are separated by four nucleotides.</text>
</comment>
<comment type="similarity">
    <text evidence="3">Belongs to the bacterial ribosomal protein bL34 family.</text>
</comment>
<reference key="1">
    <citation type="journal article" date="2000" name="Biol. Chem.">
        <title>Identification of the 50S ribosomal proteins from the eubacterium Thermus thermophilus.</title>
        <authorList>
            <person name="Katsani K.R."/>
            <person name="Tsiboli P."/>
            <person name="Anagnostopoulos K."/>
            <person name="Urlaub H."/>
            <person name="Choli-Papadopoulou T."/>
        </authorList>
    </citation>
    <scope>PROTEIN SEQUENCE</scope>
    <source>
        <strain>ATCC 27634 / DSM 579 / HB8</strain>
    </source>
</reference>
<reference key="2">
    <citation type="journal article" date="2003" name="Proc. Natl. Acad. Sci. U.S.A.">
        <title>An unusual mechanism of bacterial gene expression revealed for the RNase P protein of Thermus strains.</title>
        <authorList>
            <person name="Feltens R."/>
            <person name="Gossringer M."/>
            <person name="Willkomm D.K."/>
            <person name="Urlaub H."/>
            <person name="Hartmann R.K."/>
        </authorList>
    </citation>
    <scope>NUCLEOTIDE SEQUENCE [GENOMIC DNA]</scope>
</reference>
<reference key="3">
    <citation type="submission" date="2004-11" db="EMBL/GenBank/DDBJ databases">
        <title>Complete genome sequence of Thermus thermophilus HB8.</title>
        <authorList>
            <person name="Masui R."/>
            <person name="Kurokawa K."/>
            <person name="Nakagawa N."/>
            <person name="Tokunaga F."/>
            <person name="Koyama Y."/>
            <person name="Shibata T."/>
            <person name="Oshima T."/>
            <person name="Yokoyama S."/>
            <person name="Yasunaga T."/>
            <person name="Kuramitsu S."/>
        </authorList>
    </citation>
    <scope>NUCLEOTIDE SEQUENCE [LARGE SCALE GENOMIC DNA]</scope>
    <source>
        <strain>ATCC 27634 / DSM 579 / HB8</strain>
    </source>
</reference>
<reference key="4">
    <citation type="submission" date="1994-02" db="UniProtKB">
        <authorList>
            <person name="Boysen R.I."/>
            <person name="Schroeder W."/>
            <person name="Erdmann V.A."/>
        </authorList>
    </citation>
    <scope>PROTEIN SEQUENCE OF 1-22</scope>
</reference>
<reference key="5">
    <citation type="journal article" date="2005" name="Proteomics">
        <title>Extending ribosomal protein identifications to unsequenced bacterial strains using matrix-assisted laser desorption/ionization mass spectrometry.</title>
        <authorList>
            <person name="Suh M.-J."/>
            <person name="Hamburg D.M."/>
            <person name="Gregory S.T."/>
            <person name="Dahlberg A.E."/>
            <person name="Limbach P.A."/>
        </authorList>
    </citation>
    <scope>MASS SPECTROMETRY</scope>
    <source>
        <strain>ATCC 27634 / DSM 579 / HB8</strain>
    </source>
</reference>
<reference key="6">
    <citation type="journal article" date="2001" name="Science">
        <title>Crystal structure of the ribosome at 5.5 A resolution.</title>
        <authorList>
            <person name="Yusupov M.M."/>
            <person name="Yusupova G.Z."/>
            <person name="Baucom A."/>
            <person name="Lieberman K."/>
            <person name="Earnest T.N."/>
            <person name="Cate J.H.D."/>
            <person name="Noller H.F."/>
        </authorList>
    </citation>
    <scope>STRUCTURE OF THE RIBOSOME</scope>
</reference>
<reference key="7">
    <citation type="journal article" date="2008" name="Science">
        <title>Insights into translational termination from the structure of RF2 bound to the ribosome.</title>
        <authorList>
            <person name="Weixlbaumer A."/>
            <person name="Jin H."/>
            <person name="Neubauer C."/>
            <person name="Voorhees R.M."/>
            <person name="Petry S."/>
            <person name="Kelley A.C."/>
            <person name="Ramakrishnan V."/>
        </authorList>
    </citation>
    <scope>X-RAY CRYSTALLOGRAPHY (3.45 ANGSTROMS) OF 70S RIBOSOME IN COMPLEX WITH RF2</scope>
    <scope>SUBUNIT</scope>
</reference>
<reference key="8">
    <citation type="journal article" date="2010" name="Proc. Natl. Acad. Sci. U.S.A.">
        <title>Structure of the 70S ribosome bound to release factor 2 and a substrate analog provides insights into catalysis of peptide release.</title>
        <authorList>
            <person name="Jin H."/>
            <person name="Kelley A.C."/>
            <person name="Loakes D."/>
            <person name="Ramakrishnan V."/>
        </authorList>
    </citation>
    <scope>X-RAY CRYSTALLOGRAPHY (3.10 ANGSTROMS) OF 70S RIBOSOME IN COMPLEX WITH RF2</scope>
    <scope>SUBUNIT</scope>
</reference>
<name>RL34_THET8</name>
<proteinExistence type="evidence at protein level"/>